<proteinExistence type="inferred from homology"/>
<gene>
    <name evidence="1" type="primary">xseA</name>
    <name type="ordered locus">str1218</name>
</gene>
<dbReference type="EC" id="3.1.11.6" evidence="1"/>
<dbReference type="EMBL" id="CP000024">
    <property type="protein sequence ID" value="AAV62763.1"/>
    <property type="molecule type" value="Genomic_DNA"/>
</dbReference>
<dbReference type="RefSeq" id="WP_011227294.1">
    <property type="nucleotide sequence ID" value="NC_006449.1"/>
</dbReference>
<dbReference type="SMR" id="Q5LZD9"/>
<dbReference type="KEGG" id="stc:str1218"/>
<dbReference type="HOGENOM" id="CLU_023625_3_1_9"/>
<dbReference type="GO" id="GO:0005737">
    <property type="term" value="C:cytoplasm"/>
    <property type="evidence" value="ECO:0007669"/>
    <property type="project" value="UniProtKB-SubCell"/>
</dbReference>
<dbReference type="GO" id="GO:0009318">
    <property type="term" value="C:exodeoxyribonuclease VII complex"/>
    <property type="evidence" value="ECO:0007669"/>
    <property type="project" value="InterPro"/>
</dbReference>
<dbReference type="GO" id="GO:0008855">
    <property type="term" value="F:exodeoxyribonuclease VII activity"/>
    <property type="evidence" value="ECO:0007669"/>
    <property type="project" value="UniProtKB-UniRule"/>
</dbReference>
<dbReference type="GO" id="GO:0003676">
    <property type="term" value="F:nucleic acid binding"/>
    <property type="evidence" value="ECO:0007669"/>
    <property type="project" value="InterPro"/>
</dbReference>
<dbReference type="GO" id="GO:0006308">
    <property type="term" value="P:DNA catabolic process"/>
    <property type="evidence" value="ECO:0007669"/>
    <property type="project" value="UniProtKB-UniRule"/>
</dbReference>
<dbReference type="CDD" id="cd04489">
    <property type="entry name" value="ExoVII_LU_OBF"/>
    <property type="match status" value="1"/>
</dbReference>
<dbReference type="HAMAP" id="MF_00378">
    <property type="entry name" value="Exonuc_7_L"/>
    <property type="match status" value="1"/>
</dbReference>
<dbReference type="InterPro" id="IPR003753">
    <property type="entry name" value="Exonuc_VII_L"/>
</dbReference>
<dbReference type="InterPro" id="IPR020579">
    <property type="entry name" value="Exonuc_VII_lsu_C"/>
</dbReference>
<dbReference type="InterPro" id="IPR025824">
    <property type="entry name" value="OB-fold_nuc-bd_dom"/>
</dbReference>
<dbReference type="NCBIfam" id="TIGR00237">
    <property type="entry name" value="xseA"/>
    <property type="match status" value="1"/>
</dbReference>
<dbReference type="PANTHER" id="PTHR30008">
    <property type="entry name" value="EXODEOXYRIBONUCLEASE 7 LARGE SUBUNIT"/>
    <property type="match status" value="1"/>
</dbReference>
<dbReference type="PANTHER" id="PTHR30008:SF0">
    <property type="entry name" value="EXODEOXYRIBONUCLEASE 7 LARGE SUBUNIT"/>
    <property type="match status" value="1"/>
</dbReference>
<dbReference type="Pfam" id="PF02601">
    <property type="entry name" value="Exonuc_VII_L"/>
    <property type="match status" value="1"/>
</dbReference>
<dbReference type="Pfam" id="PF13742">
    <property type="entry name" value="tRNA_anti_2"/>
    <property type="match status" value="1"/>
</dbReference>
<keyword id="KW-0963">Cytoplasm</keyword>
<keyword id="KW-0269">Exonuclease</keyword>
<keyword id="KW-0378">Hydrolase</keyword>
<keyword id="KW-0540">Nuclease</keyword>
<name>EX7L_STRT1</name>
<evidence type="ECO:0000255" key="1">
    <source>
        <dbReference type="HAMAP-Rule" id="MF_00378"/>
    </source>
</evidence>
<organism>
    <name type="scientific">Streptococcus thermophilus (strain CNRZ 1066)</name>
    <dbReference type="NCBI Taxonomy" id="299768"/>
    <lineage>
        <taxon>Bacteria</taxon>
        <taxon>Bacillati</taxon>
        <taxon>Bacillota</taxon>
        <taxon>Bacilli</taxon>
        <taxon>Lactobacillales</taxon>
        <taxon>Streptococcaceae</taxon>
        <taxon>Streptococcus</taxon>
    </lineage>
</organism>
<feature type="chain" id="PRO_0000303826" description="Exodeoxyribonuclease 7 large subunit">
    <location>
        <begin position="1"/>
        <end position="446"/>
    </location>
</feature>
<protein>
    <recommendedName>
        <fullName evidence="1">Exodeoxyribonuclease 7 large subunit</fullName>
        <ecNumber evidence="1">3.1.11.6</ecNumber>
    </recommendedName>
    <alternativeName>
        <fullName evidence="1">Exodeoxyribonuclease VII large subunit</fullName>
        <shortName evidence="1">Exonuclease VII large subunit</shortName>
    </alternativeName>
</protein>
<reference key="1">
    <citation type="journal article" date="2004" name="Nat. Biotechnol.">
        <title>Complete sequence and comparative genome analysis of the dairy bacterium Streptococcus thermophilus.</title>
        <authorList>
            <person name="Bolotin A."/>
            <person name="Quinquis B."/>
            <person name="Renault P."/>
            <person name="Sorokin A."/>
            <person name="Ehrlich S.D."/>
            <person name="Kulakauskas S."/>
            <person name="Lapidus A."/>
            <person name="Goltsman E."/>
            <person name="Mazur M."/>
            <person name="Pusch G.D."/>
            <person name="Fonstein M."/>
            <person name="Overbeek R."/>
            <person name="Kyprides N."/>
            <person name="Purnelle B."/>
            <person name="Prozzi D."/>
            <person name="Ngui K."/>
            <person name="Masuy D."/>
            <person name="Hancy F."/>
            <person name="Burteau S."/>
            <person name="Boutry M."/>
            <person name="Delcour J."/>
            <person name="Goffeau A."/>
            <person name="Hols P."/>
        </authorList>
    </citation>
    <scope>NUCLEOTIDE SEQUENCE [LARGE SCALE GENOMIC DNA]</scope>
    <source>
        <strain>CNRZ 1066</strain>
    </source>
</reference>
<accession>Q5LZD9</accession>
<sequence length="446" mass="50802">MSDYLSVTSLTKYLKMKFDRDPYLERVYLTGQVSNYRRRPSHQYFSLKDEGAVIQATIWAGVFKKIGFDLEEGMKINVVGRVQIYEPSGSYSLIIEKAEPDGIGALALQFEQLRKKLTAEGYFDDRHKQPLPNFVKKIGVITSPSGAVIRDIITTVSRRFPGVEILLFPTKVQGDGAAQEIVENIQKANQREDLDLLIVGRGGGSIEDLWAFNEEIVVQSIFESRLPVISSVGHETDTTLADFVADRRAATPTAAAELATPISKADTLAWIRERQNRAYQACLRRIQYNQERLAKLSQSVVFRQPERLYDGYLQKLDHLTTRLETFMSQDFERKQKSAEFLRQRLHGLNLSTRVKNYQDRRESLQRLLVTTTKNTINGNRVRLEKAQDALLSLDTSRIVARGYAIVNKNDKPLTTIKDITEGEQLTIQMRDGQLEVEVKNVNEKNI</sequence>
<comment type="function">
    <text evidence="1">Bidirectionally degrades single-stranded DNA into large acid-insoluble oligonucleotides, which are then degraded further into small acid-soluble oligonucleotides.</text>
</comment>
<comment type="catalytic activity">
    <reaction evidence="1">
        <text>Exonucleolytic cleavage in either 5'- to 3'- or 3'- to 5'-direction to yield nucleoside 5'-phosphates.</text>
        <dbReference type="EC" id="3.1.11.6"/>
    </reaction>
</comment>
<comment type="subunit">
    <text evidence="1">Heterooligomer composed of large and small subunits.</text>
</comment>
<comment type="subcellular location">
    <subcellularLocation>
        <location evidence="1">Cytoplasm</location>
    </subcellularLocation>
</comment>
<comment type="similarity">
    <text evidence="1">Belongs to the XseA family.</text>
</comment>